<dbReference type="EC" id="2.1.1.-"/>
<dbReference type="EMBL" id="AM408590">
    <property type="protein sequence ID" value="CAL73633.1"/>
    <property type="molecule type" value="Genomic_DNA"/>
</dbReference>
<dbReference type="SMR" id="A1KPR5"/>
<dbReference type="KEGG" id="mbb:BCG_3644c"/>
<dbReference type="HOGENOM" id="CLU_021322_0_0_11"/>
<dbReference type="Proteomes" id="UP000001472">
    <property type="component" value="Chromosome"/>
</dbReference>
<dbReference type="GO" id="GO:0005829">
    <property type="term" value="C:cytosol"/>
    <property type="evidence" value="ECO:0007669"/>
    <property type="project" value="TreeGrafter"/>
</dbReference>
<dbReference type="GO" id="GO:0003723">
    <property type="term" value="F:RNA binding"/>
    <property type="evidence" value="ECO:0007669"/>
    <property type="project" value="InterPro"/>
</dbReference>
<dbReference type="GO" id="GO:0008173">
    <property type="term" value="F:RNA methyltransferase activity"/>
    <property type="evidence" value="ECO:0007669"/>
    <property type="project" value="InterPro"/>
</dbReference>
<dbReference type="GO" id="GO:0032259">
    <property type="term" value="P:methylation"/>
    <property type="evidence" value="ECO:0007669"/>
    <property type="project" value="UniProtKB-KW"/>
</dbReference>
<dbReference type="GO" id="GO:0006396">
    <property type="term" value="P:RNA processing"/>
    <property type="evidence" value="ECO:0007669"/>
    <property type="project" value="InterPro"/>
</dbReference>
<dbReference type="CDD" id="cd18103">
    <property type="entry name" value="SpoU-like_RlmB"/>
    <property type="match status" value="1"/>
</dbReference>
<dbReference type="FunFam" id="3.30.1330.30:FF:000024">
    <property type="entry name" value="Putative tRNA/rRNA methyltransferase"/>
    <property type="match status" value="1"/>
</dbReference>
<dbReference type="FunFam" id="3.40.1280.10:FF:000015">
    <property type="entry name" value="Putative tRNA/rRNA methyltransferase"/>
    <property type="match status" value="1"/>
</dbReference>
<dbReference type="Gene3D" id="3.30.1330.30">
    <property type="match status" value="1"/>
</dbReference>
<dbReference type="Gene3D" id="3.40.1280.10">
    <property type="match status" value="1"/>
</dbReference>
<dbReference type="InterPro" id="IPR029028">
    <property type="entry name" value="Alpha/beta_knot_MTases"/>
</dbReference>
<dbReference type="InterPro" id="IPR029064">
    <property type="entry name" value="Ribosomal_eL30-like_sf"/>
</dbReference>
<dbReference type="InterPro" id="IPR004441">
    <property type="entry name" value="rRNA_MeTrfase_TrmH"/>
</dbReference>
<dbReference type="InterPro" id="IPR001537">
    <property type="entry name" value="SpoU_MeTrfase"/>
</dbReference>
<dbReference type="InterPro" id="IPR013123">
    <property type="entry name" value="SpoU_subst-bd"/>
</dbReference>
<dbReference type="InterPro" id="IPR029026">
    <property type="entry name" value="tRNA_m1G_MTases_N"/>
</dbReference>
<dbReference type="NCBIfam" id="TIGR00186">
    <property type="entry name" value="rRNA_methyl_3"/>
    <property type="match status" value="1"/>
</dbReference>
<dbReference type="PANTHER" id="PTHR46429">
    <property type="entry name" value="23S RRNA (GUANOSINE-2'-O-)-METHYLTRANSFERASE RLMB"/>
    <property type="match status" value="1"/>
</dbReference>
<dbReference type="PANTHER" id="PTHR46429:SF1">
    <property type="entry name" value="23S RRNA (GUANOSINE-2'-O-)-METHYLTRANSFERASE RLMB"/>
    <property type="match status" value="1"/>
</dbReference>
<dbReference type="Pfam" id="PF00588">
    <property type="entry name" value="SpoU_methylase"/>
    <property type="match status" value="1"/>
</dbReference>
<dbReference type="Pfam" id="PF08032">
    <property type="entry name" value="SpoU_sub_bind"/>
    <property type="match status" value="1"/>
</dbReference>
<dbReference type="SMART" id="SM00967">
    <property type="entry name" value="SpoU_sub_bind"/>
    <property type="match status" value="1"/>
</dbReference>
<dbReference type="SUPFAM" id="SSF75217">
    <property type="entry name" value="alpha/beta knot"/>
    <property type="match status" value="1"/>
</dbReference>
<dbReference type="SUPFAM" id="SSF55315">
    <property type="entry name" value="L30e-like"/>
    <property type="match status" value="1"/>
</dbReference>
<protein>
    <recommendedName>
        <fullName>Uncharacterized tRNA/rRNA methyltransferase BCG_3644c</fullName>
        <ecNumber>2.1.1.-</ecNumber>
    </recommendedName>
</protein>
<reference key="1">
    <citation type="journal article" date="2007" name="Proc. Natl. Acad. Sci. U.S.A.">
        <title>Genome plasticity of BCG and impact on vaccine efficacy.</title>
        <authorList>
            <person name="Brosch R."/>
            <person name="Gordon S.V."/>
            <person name="Garnier T."/>
            <person name="Eiglmeier K."/>
            <person name="Frigui W."/>
            <person name="Valenti P."/>
            <person name="Dos Santos S."/>
            <person name="Duthoy S."/>
            <person name="Lacroix C."/>
            <person name="Garcia-Pelayo C."/>
            <person name="Inwald J.K."/>
            <person name="Golby P."/>
            <person name="Garcia J.N."/>
            <person name="Hewinson R.G."/>
            <person name="Behr M.A."/>
            <person name="Quail M.A."/>
            <person name="Churcher C."/>
            <person name="Barrell B.G."/>
            <person name="Parkhill J."/>
            <person name="Cole S.T."/>
        </authorList>
    </citation>
    <scope>NUCLEOTIDE SEQUENCE [LARGE SCALE GENOMIC DNA]</scope>
    <source>
        <strain>BCG / Pasteur 1173P2</strain>
    </source>
</reference>
<gene>
    <name type="ordered locus">BCG_3644c</name>
</gene>
<keyword id="KW-0489">Methyltransferase</keyword>
<keyword id="KW-0949">S-adenosyl-L-methionine</keyword>
<keyword id="KW-0808">Transferase</keyword>
<comment type="similarity">
    <text evidence="3">Belongs to the class IV-like SAM-binding methyltransferase superfamily. RNA methyltransferase TrmH family.</text>
</comment>
<feature type="chain" id="PRO_0000379571" description="Uncharacterized tRNA/rRNA methyltransferase BCG_3644c">
    <location>
        <begin position="1"/>
        <end position="322"/>
    </location>
</feature>
<feature type="region of interest" description="Disordered" evidence="2">
    <location>
        <begin position="1"/>
        <end position="69"/>
    </location>
</feature>
<feature type="compositionally biased region" description="Basic residues" evidence="2">
    <location>
        <begin position="1"/>
        <end position="16"/>
    </location>
</feature>
<feature type="compositionally biased region" description="Basic residues" evidence="2">
    <location>
        <begin position="43"/>
        <end position="61"/>
    </location>
</feature>
<feature type="binding site" evidence="1">
    <location>
        <position position="261"/>
    </location>
    <ligand>
        <name>S-adenosyl-L-methionine</name>
        <dbReference type="ChEBI" id="CHEBI:59789"/>
    </ligand>
</feature>
<feature type="binding site" evidence="1">
    <location>
        <position position="281"/>
    </location>
    <ligand>
        <name>S-adenosyl-L-methionine</name>
        <dbReference type="ChEBI" id="CHEBI:59789"/>
    </ligand>
</feature>
<feature type="binding site" evidence="1">
    <location>
        <position position="290"/>
    </location>
    <ligand>
        <name>S-adenosyl-L-methionine</name>
        <dbReference type="ChEBI" id="CHEBI:59789"/>
    </ligand>
</feature>
<evidence type="ECO:0000250" key="1"/>
<evidence type="ECO:0000256" key="2">
    <source>
        <dbReference type="SAM" id="MobiDB-lite"/>
    </source>
</evidence>
<evidence type="ECO:0000305" key="3"/>
<proteinExistence type="inferred from homology"/>
<name>Y3644_MYCBP</name>
<sequence>MPGNSRRRGAVRKSGTKKGAGVGSGGQRRRGLEGRGPTPPAHLRPHHPAAKRARAQPRRPVKRADETETVLGRNPVLECLRAGVPATALYVALGTEADERLTECVARAADSGIAIVELLRADLDRMTANHLHQGIALQVPPYNYAHPDDLLAAALDQPPALLVALDNLSDPRNLGAIVRSVAAFGGHGVLIPQRRSASVTAVAWRTSAGAAARIPVARATNLTRTLKGWADRGVRVIGLDAGGGTALDDVDGTDSLVVVVGSEGKGLSRLVRQNCDEVVSIPMAAQAESLNASVAAGVVLAAIARQRRRPREPREQTQNRMI</sequence>
<organism>
    <name type="scientific">Mycobacterium bovis (strain BCG / Pasteur 1173P2)</name>
    <dbReference type="NCBI Taxonomy" id="410289"/>
    <lineage>
        <taxon>Bacteria</taxon>
        <taxon>Bacillati</taxon>
        <taxon>Actinomycetota</taxon>
        <taxon>Actinomycetes</taxon>
        <taxon>Mycobacteriales</taxon>
        <taxon>Mycobacteriaceae</taxon>
        <taxon>Mycobacterium</taxon>
        <taxon>Mycobacterium tuberculosis complex</taxon>
    </lineage>
</organism>
<accession>A1KPR5</accession>